<sequence length="217" mass="23586">MSATNKQNAASVFGRPWIFIRGVPSMKFLPPEGPTEIAFAGRSNVGKSSLINALVGHKGLARTSNTPGRTQELNYFVPDGYSGEAGDLPPMALVDMPGYGYAQAPKEQVDAWTKLVFDYLRGRSTLKRVYVLIDARHGIKKNDEDVLALLDKAAVSYQIVLTKTDKIKAAGVPRLVAETLEKIKKRPAAFPEVLSTSSEKGEGIEDLRAAIELAVTR</sequence>
<evidence type="ECO:0000255" key="1">
    <source>
        <dbReference type="HAMAP-Rule" id="MF_00321"/>
    </source>
</evidence>
<comment type="function">
    <text evidence="1">Necessary for normal cell division and for the maintenance of normal septation.</text>
</comment>
<comment type="cofactor">
    <cofactor evidence="1">
        <name>Mg(2+)</name>
        <dbReference type="ChEBI" id="CHEBI:18420"/>
    </cofactor>
</comment>
<comment type="similarity">
    <text evidence="1">Belongs to the TRAFAC class TrmE-Era-EngA-EngB-Septin-like GTPase superfamily. EngB GTPase family.</text>
</comment>
<keyword id="KW-0131">Cell cycle</keyword>
<keyword id="KW-0132">Cell division</keyword>
<keyword id="KW-0342">GTP-binding</keyword>
<keyword id="KW-0460">Magnesium</keyword>
<keyword id="KW-0479">Metal-binding</keyword>
<keyword id="KW-0547">Nucleotide-binding</keyword>
<keyword id="KW-1185">Reference proteome</keyword>
<keyword id="KW-0717">Septation</keyword>
<organism>
    <name type="scientific">Rhizobium meliloti (strain 1021)</name>
    <name type="common">Ensifer meliloti</name>
    <name type="synonym">Sinorhizobium meliloti</name>
    <dbReference type="NCBI Taxonomy" id="266834"/>
    <lineage>
        <taxon>Bacteria</taxon>
        <taxon>Pseudomonadati</taxon>
        <taxon>Pseudomonadota</taxon>
        <taxon>Alphaproteobacteria</taxon>
        <taxon>Hyphomicrobiales</taxon>
        <taxon>Rhizobiaceae</taxon>
        <taxon>Sinorhizobium/Ensifer group</taxon>
        <taxon>Sinorhizobium</taxon>
    </lineage>
</organism>
<dbReference type="EMBL" id="AL591688">
    <property type="protein sequence ID" value="CAC41880.1"/>
    <property type="molecule type" value="Genomic_DNA"/>
</dbReference>
<dbReference type="RefSeq" id="NP_384549.1">
    <property type="nucleotide sequence ID" value="NC_003047.1"/>
</dbReference>
<dbReference type="SMR" id="Q92SF6"/>
<dbReference type="EnsemblBacteria" id="CAC41880">
    <property type="protein sequence ID" value="CAC41880"/>
    <property type="gene ID" value="SMc01722"/>
</dbReference>
<dbReference type="KEGG" id="sme:SMc01722"/>
<dbReference type="PATRIC" id="fig|266834.11.peg.1817"/>
<dbReference type="eggNOG" id="COG0218">
    <property type="taxonomic scope" value="Bacteria"/>
</dbReference>
<dbReference type="HOGENOM" id="CLU_033732_2_0_5"/>
<dbReference type="OrthoDB" id="9804921at2"/>
<dbReference type="Proteomes" id="UP000001976">
    <property type="component" value="Chromosome"/>
</dbReference>
<dbReference type="GO" id="GO:0005829">
    <property type="term" value="C:cytosol"/>
    <property type="evidence" value="ECO:0007669"/>
    <property type="project" value="TreeGrafter"/>
</dbReference>
<dbReference type="GO" id="GO:0005525">
    <property type="term" value="F:GTP binding"/>
    <property type="evidence" value="ECO:0007669"/>
    <property type="project" value="UniProtKB-UniRule"/>
</dbReference>
<dbReference type="GO" id="GO:0046872">
    <property type="term" value="F:metal ion binding"/>
    <property type="evidence" value="ECO:0007669"/>
    <property type="project" value="UniProtKB-KW"/>
</dbReference>
<dbReference type="GO" id="GO:0000917">
    <property type="term" value="P:division septum assembly"/>
    <property type="evidence" value="ECO:0007669"/>
    <property type="project" value="UniProtKB-KW"/>
</dbReference>
<dbReference type="CDD" id="cd01876">
    <property type="entry name" value="YihA_EngB"/>
    <property type="match status" value="1"/>
</dbReference>
<dbReference type="Gene3D" id="3.40.50.300">
    <property type="entry name" value="P-loop containing nucleotide triphosphate hydrolases"/>
    <property type="match status" value="1"/>
</dbReference>
<dbReference type="HAMAP" id="MF_00321">
    <property type="entry name" value="GTPase_EngB"/>
    <property type="match status" value="1"/>
</dbReference>
<dbReference type="InterPro" id="IPR030393">
    <property type="entry name" value="G_ENGB_dom"/>
</dbReference>
<dbReference type="InterPro" id="IPR006073">
    <property type="entry name" value="GTP-bd"/>
</dbReference>
<dbReference type="InterPro" id="IPR019987">
    <property type="entry name" value="GTP-bd_ribosome_bio_YsxC"/>
</dbReference>
<dbReference type="InterPro" id="IPR027417">
    <property type="entry name" value="P-loop_NTPase"/>
</dbReference>
<dbReference type="NCBIfam" id="TIGR03598">
    <property type="entry name" value="GTPase_YsxC"/>
    <property type="match status" value="1"/>
</dbReference>
<dbReference type="PANTHER" id="PTHR11649:SF13">
    <property type="entry name" value="ENGB-TYPE G DOMAIN-CONTAINING PROTEIN"/>
    <property type="match status" value="1"/>
</dbReference>
<dbReference type="PANTHER" id="PTHR11649">
    <property type="entry name" value="MSS1/TRME-RELATED GTP-BINDING PROTEIN"/>
    <property type="match status" value="1"/>
</dbReference>
<dbReference type="Pfam" id="PF01926">
    <property type="entry name" value="MMR_HSR1"/>
    <property type="match status" value="1"/>
</dbReference>
<dbReference type="SUPFAM" id="SSF52540">
    <property type="entry name" value="P-loop containing nucleoside triphosphate hydrolases"/>
    <property type="match status" value="1"/>
</dbReference>
<dbReference type="PROSITE" id="PS51706">
    <property type="entry name" value="G_ENGB"/>
    <property type="match status" value="1"/>
</dbReference>
<proteinExistence type="inferred from homology"/>
<name>ENGB_RHIME</name>
<reference key="1">
    <citation type="journal article" date="2001" name="Proc. Natl. Acad. Sci. U.S.A.">
        <title>Analysis of the chromosome sequence of the legume symbiont Sinorhizobium meliloti strain 1021.</title>
        <authorList>
            <person name="Capela D."/>
            <person name="Barloy-Hubler F."/>
            <person name="Gouzy J."/>
            <person name="Bothe G."/>
            <person name="Ampe F."/>
            <person name="Batut J."/>
            <person name="Boistard P."/>
            <person name="Becker A."/>
            <person name="Boutry M."/>
            <person name="Cadieu E."/>
            <person name="Dreano S."/>
            <person name="Gloux S."/>
            <person name="Godrie T."/>
            <person name="Goffeau A."/>
            <person name="Kahn D."/>
            <person name="Kiss E."/>
            <person name="Lelaure V."/>
            <person name="Masuy D."/>
            <person name="Pohl T."/>
            <person name="Portetelle D."/>
            <person name="Puehler A."/>
            <person name="Purnelle B."/>
            <person name="Ramsperger U."/>
            <person name="Renard C."/>
            <person name="Thebault P."/>
            <person name="Vandenbol M."/>
            <person name="Weidner S."/>
            <person name="Galibert F."/>
        </authorList>
    </citation>
    <scope>NUCLEOTIDE SEQUENCE [LARGE SCALE GENOMIC DNA]</scope>
    <source>
        <strain>1021</strain>
    </source>
</reference>
<reference key="2">
    <citation type="journal article" date="2001" name="Science">
        <title>The composite genome of the legume symbiont Sinorhizobium meliloti.</title>
        <authorList>
            <person name="Galibert F."/>
            <person name="Finan T.M."/>
            <person name="Long S.R."/>
            <person name="Puehler A."/>
            <person name="Abola P."/>
            <person name="Ampe F."/>
            <person name="Barloy-Hubler F."/>
            <person name="Barnett M.J."/>
            <person name="Becker A."/>
            <person name="Boistard P."/>
            <person name="Bothe G."/>
            <person name="Boutry M."/>
            <person name="Bowser L."/>
            <person name="Buhrmester J."/>
            <person name="Cadieu E."/>
            <person name="Capela D."/>
            <person name="Chain P."/>
            <person name="Cowie A."/>
            <person name="Davis R.W."/>
            <person name="Dreano S."/>
            <person name="Federspiel N.A."/>
            <person name="Fisher R.F."/>
            <person name="Gloux S."/>
            <person name="Godrie T."/>
            <person name="Goffeau A."/>
            <person name="Golding B."/>
            <person name="Gouzy J."/>
            <person name="Gurjal M."/>
            <person name="Hernandez-Lucas I."/>
            <person name="Hong A."/>
            <person name="Huizar L."/>
            <person name="Hyman R.W."/>
            <person name="Jones T."/>
            <person name="Kahn D."/>
            <person name="Kahn M.L."/>
            <person name="Kalman S."/>
            <person name="Keating D.H."/>
            <person name="Kiss E."/>
            <person name="Komp C."/>
            <person name="Lelaure V."/>
            <person name="Masuy D."/>
            <person name="Palm C."/>
            <person name="Peck M.C."/>
            <person name="Pohl T.M."/>
            <person name="Portetelle D."/>
            <person name="Purnelle B."/>
            <person name="Ramsperger U."/>
            <person name="Surzycki R."/>
            <person name="Thebault P."/>
            <person name="Vandenbol M."/>
            <person name="Vorhoelter F.J."/>
            <person name="Weidner S."/>
            <person name="Wells D.H."/>
            <person name="Wong K."/>
            <person name="Yeh K.-C."/>
            <person name="Batut J."/>
        </authorList>
    </citation>
    <scope>NUCLEOTIDE SEQUENCE [LARGE SCALE GENOMIC DNA]</scope>
    <source>
        <strain>1021</strain>
    </source>
</reference>
<accession>Q92SF6</accession>
<feature type="chain" id="PRO_0000157775" description="Probable GTP-binding protein EngB">
    <location>
        <begin position="1"/>
        <end position="217"/>
    </location>
</feature>
<feature type="domain" description="EngB-type G" evidence="1">
    <location>
        <begin position="33"/>
        <end position="217"/>
    </location>
</feature>
<feature type="binding site" evidence="1">
    <location>
        <begin position="41"/>
        <end position="48"/>
    </location>
    <ligand>
        <name>GTP</name>
        <dbReference type="ChEBI" id="CHEBI:37565"/>
    </ligand>
</feature>
<feature type="binding site" evidence="1">
    <location>
        <position position="48"/>
    </location>
    <ligand>
        <name>Mg(2+)</name>
        <dbReference type="ChEBI" id="CHEBI:18420"/>
    </ligand>
</feature>
<feature type="binding site" evidence="1">
    <location>
        <begin position="68"/>
        <end position="72"/>
    </location>
    <ligand>
        <name>GTP</name>
        <dbReference type="ChEBI" id="CHEBI:37565"/>
    </ligand>
</feature>
<feature type="binding site" evidence="1">
    <location>
        <position position="70"/>
    </location>
    <ligand>
        <name>Mg(2+)</name>
        <dbReference type="ChEBI" id="CHEBI:18420"/>
    </ligand>
</feature>
<feature type="binding site" evidence="1">
    <location>
        <begin position="95"/>
        <end position="98"/>
    </location>
    <ligand>
        <name>GTP</name>
        <dbReference type="ChEBI" id="CHEBI:37565"/>
    </ligand>
</feature>
<feature type="binding site" evidence="1">
    <location>
        <begin position="162"/>
        <end position="165"/>
    </location>
    <ligand>
        <name>GTP</name>
        <dbReference type="ChEBI" id="CHEBI:37565"/>
    </ligand>
</feature>
<feature type="binding site" evidence="1">
    <location>
        <begin position="196"/>
        <end position="198"/>
    </location>
    <ligand>
        <name>GTP</name>
        <dbReference type="ChEBI" id="CHEBI:37565"/>
    </ligand>
</feature>
<gene>
    <name evidence="1" type="primary">engB</name>
    <name type="ordered locus">R00443</name>
    <name type="ORF">SMc01722</name>
</gene>
<protein>
    <recommendedName>
        <fullName evidence="1">Probable GTP-binding protein EngB</fullName>
    </recommendedName>
</protein>